<proteinExistence type="evidence at protein level"/>
<organism>
    <name type="scientific">Mycobacterium tuberculosis (strain ATCC 25177 / H37Ra)</name>
    <dbReference type="NCBI Taxonomy" id="419947"/>
    <lineage>
        <taxon>Bacteria</taxon>
        <taxon>Bacillati</taxon>
        <taxon>Actinomycetota</taxon>
        <taxon>Actinomycetes</taxon>
        <taxon>Mycobacteriales</taxon>
        <taxon>Mycobacteriaceae</taxon>
        <taxon>Mycobacterium</taxon>
        <taxon>Mycobacterium tuberculosis complex</taxon>
    </lineage>
</organism>
<accession>A5U229</accession>
<feature type="chain" id="PRO_0000460624" description="ATP-dependent helicase DinG">
    <location>
        <begin position="1"/>
        <end position="664"/>
    </location>
</feature>
<feature type="domain" description="Helicase ATP-binding" evidence="1">
    <location>
        <begin position="14"/>
        <end position="290"/>
    </location>
</feature>
<feature type="short sequence motif" description="DEAH box" evidence="1">
    <location>
        <begin position="246"/>
        <end position="249"/>
    </location>
</feature>
<feature type="binding site" evidence="1">
    <location>
        <begin position="49"/>
        <end position="56"/>
    </location>
    <ligand>
        <name>ATP</name>
        <dbReference type="ChEBI" id="CHEBI:30616"/>
    </ligand>
</feature>
<feature type="binding site" evidence="6">
    <location>
        <position position="120"/>
    </location>
    <ligand>
        <name>[4Fe-4S] cluster</name>
        <dbReference type="ChEBI" id="CHEBI:49883"/>
    </ligand>
</feature>
<feature type="binding site" evidence="6">
    <location>
        <position position="192"/>
    </location>
    <ligand>
        <name>[4Fe-4S] cluster</name>
        <dbReference type="ChEBI" id="CHEBI:49883"/>
    </ligand>
</feature>
<feature type="binding site" evidence="6">
    <location>
        <position position="198"/>
    </location>
    <ligand>
        <name>[4Fe-4S] cluster</name>
        <dbReference type="ChEBI" id="CHEBI:49883"/>
    </ligand>
</feature>
<feature type="binding site" evidence="6">
    <location>
        <position position="204"/>
    </location>
    <ligand>
        <name>[4Fe-4S] cluster</name>
        <dbReference type="ChEBI" id="CHEBI:49883"/>
    </ligand>
</feature>
<feature type="mutagenesis site" description="Loss of helicase and ssDNA translocase activity, no change in DNA-binding." evidence="2">
    <original>K</original>
    <variation>R</variation>
    <location>
        <position position="55"/>
    </location>
</feature>
<dbReference type="EC" id="5.6.2.3" evidence="2"/>
<dbReference type="EMBL" id="CP000611">
    <property type="protein sequence ID" value="ABQ73079.1"/>
    <property type="molecule type" value="Genomic_DNA"/>
</dbReference>
<dbReference type="RefSeq" id="WP_003898827.1">
    <property type="nucleotide sequence ID" value="NZ_CP016972.1"/>
</dbReference>
<dbReference type="SMR" id="A5U229"/>
<dbReference type="GeneID" id="45425307"/>
<dbReference type="KEGG" id="mra:MRA_1337"/>
<dbReference type="eggNOG" id="COG1199">
    <property type="taxonomic scope" value="Bacteria"/>
</dbReference>
<dbReference type="HOGENOM" id="CLU_012117_2_0_11"/>
<dbReference type="Proteomes" id="UP000001988">
    <property type="component" value="Chromosome"/>
</dbReference>
<dbReference type="GO" id="GO:0051539">
    <property type="term" value="F:4 iron, 4 sulfur cluster binding"/>
    <property type="evidence" value="ECO:0007669"/>
    <property type="project" value="UniProtKB-KW"/>
</dbReference>
<dbReference type="GO" id="GO:0005524">
    <property type="term" value="F:ATP binding"/>
    <property type="evidence" value="ECO:0007669"/>
    <property type="project" value="UniProtKB-KW"/>
</dbReference>
<dbReference type="GO" id="GO:0003677">
    <property type="term" value="F:DNA binding"/>
    <property type="evidence" value="ECO:0007669"/>
    <property type="project" value="UniProtKB-KW"/>
</dbReference>
<dbReference type="GO" id="GO:0003678">
    <property type="term" value="F:DNA helicase activity"/>
    <property type="evidence" value="ECO:0007669"/>
    <property type="project" value="TreeGrafter"/>
</dbReference>
<dbReference type="GO" id="GO:0016818">
    <property type="term" value="F:hydrolase activity, acting on acid anhydrides, in phosphorus-containing anhydrides"/>
    <property type="evidence" value="ECO:0007669"/>
    <property type="project" value="InterPro"/>
</dbReference>
<dbReference type="GO" id="GO:0046872">
    <property type="term" value="F:metal ion binding"/>
    <property type="evidence" value="ECO:0007669"/>
    <property type="project" value="UniProtKB-KW"/>
</dbReference>
<dbReference type="GO" id="GO:0006310">
    <property type="term" value="P:DNA recombination"/>
    <property type="evidence" value="ECO:0007669"/>
    <property type="project" value="UniProtKB-KW"/>
</dbReference>
<dbReference type="GO" id="GO:0006281">
    <property type="term" value="P:DNA repair"/>
    <property type="evidence" value="ECO:0007669"/>
    <property type="project" value="UniProtKB-KW"/>
</dbReference>
<dbReference type="FunFam" id="3.40.50.300:FF:000437">
    <property type="entry name" value="ATP-dependent DNA helicase DinG"/>
    <property type="match status" value="1"/>
</dbReference>
<dbReference type="Gene3D" id="3.40.50.300">
    <property type="entry name" value="P-loop containing nucleotide triphosphate hydrolases"/>
    <property type="match status" value="2"/>
</dbReference>
<dbReference type="InterPro" id="IPR006555">
    <property type="entry name" value="ATP-dep_Helicase_C"/>
</dbReference>
<dbReference type="InterPro" id="IPR011545">
    <property type="entry name" value="DEAD/DEAH_box_helicase_dom"/>
</dbReference>
<dbReference type="InterPro" id="IPR045028">
    <property type="entry name" value="DinG/Rad3-like"/>
</dbReference>
<dbReference type="InterPro" id="IPR014013">
    <property type="entry name" value="Helic_SF1/SF2_ATP-bd_DinG/Rad3"/>
</dbReference>
<dbReference type="InterPro" id="IPR014001">
    <property type="entry name" value="Helicase_ATP-bd"/>
</dbReference>
<dbReference type="InterPro" id="IPR027417">
    <property type="entry name" value="P-loop_NTPase"/>
</dbReference>
<dbReference type="PANTHER" id="PTHR11472">
    <property type="entry name" value="DNA REPAIR DEAD HELICASE RAD3/XP-D SUBFAMILY MEMBER"/>
    <property type="match status" value="1"/>
</dbReference>
<dbReference type="PANTHER" id="PTHR11472:SF34">
    <property type="entry name" value="REGULATOR OF TELOMERE ELONGATION HELICASE 1"/>
    <property type="match status" value="1"/>
</dbReference>
<dbReference type="Pfam" id="PF00270">
    <property type="entry name" value="DEAD"/>
    <property type="match status" value="1"/>
</dbReference>
<dbReference type="Pfam" id="PF13307">
    <property type="entry name" value="Helicase_C_2"/>
    <property type="match status" value="1"/>
</dbReference>
<dbReference type="SMART" id="SM00487">
    <property type="entry name" value="DEXDc"/>
    <property type="match status" value="1"/>
</dbReference>
<dbReference type="SMART" id="SM00491">
    <property type="entry name" value="HELICc2"/>
    <property type="match status" value="1"/>
</dbReference>
<dbReference type="SUPFAM" id="SSF52540">
    <property type="entry name" value="P-loop containing nucleoside triphosphate hydrolases"/>
    <property type="match status" value="2"/>
</dbReference>
<dbReference type="PROSITE" id="PS51193">
    <property type="entry name" value="HELICASE_ATP_BIND_2"/>
    <property type="match status" value="1"/>
</dbReference>
<protein>
    <recommendedName>
        <fullName evidence="4">ATP-dependent helicase DinG</fullName>
        <ecNumber evidence="2">5.6.2.3</ecNumber>
    </recommendedName>
    <alternativeName>
        <fullName evidence="5">DNA 5'-3' helicase DinG</fullName>
    </alternativeName>
</protein>
<sequence length="664" mass="70168">MSESVSMSVPELLAIAVAALGGTRRRGQQEMAAAVAHAFETGEHLVVQAGTGTGKSLAYLVPAIIRALCDDAPVVVSTATIALQRQLVDRDLPQLVDSLTNALPRRPKFALLKGRRNYLCLNKIHNSVTASDHDDERPQEELFDPVAVTALGRDVQRLTAWASTTVSGDRDDLKPGVGDRSWSQVSVSARECLGVARCPFGSECFSERARGAAGLADVVVTNHALLAIDAVAESAVLPEHRLLVVDEAHELADRVTSVAAAELTSATLGMAARRITRLVDPKVTQRLQAASATFSSAIHDARPGRIDCLDDEMATYLSALRDAASAARSAIDTGSDTTTASVRAEAGAVLTEISDTASRILASFAPAIPDRSDVVWLEHEDNHESARAVLRVAPLSVAELLATQVFARATTVLTSATLTIGGSFDAMATAWGLTADTPWRGLDVGSPFQHAKSGILYVAAHLPPPGRDGSGSAEQLTEIAELITAAGGRTLGLFSSMRAARAATEAMRERLSTPVLCQGDDSTSTLVEKFTADAATSLFGTLSLWQGVDVPGPSLSLVLIDRIPFPRPDDPLLSARQRAVAARGGNGFMTVAASHAALLLAQGSGRLLRRVTDRGVVAVLDSRMATARYGEFLRASLPPFWQTTNATQVRAALRRLARADAKAH</sequence>
<comment type="function">
    <text evidence="2">A structure-dependent 5'-3' DNA helicase that unwinds a number of substrates that resemble intermediates in DNA repair, recombination and replication. Requires 15-25 nucleotides of 3'-overhang single-stranded (ss)DNA for optimal activity (PubMed:25059658). Unwinds 3'-flap and forked duplex DNA (PubMed:25059658). Unwinds both lead and lagging strands in replication fork structures (may have branch migration activity) (PubMed:25059658). Has weak Holliday junction unwinding activity (PubMed:25059658). In vitro at high concentrations also unwinds in a 3'-5' direction (PubMed:25059658). Binds best to ssDNA, followed by forked duplex, 3'- and 5'-overhang and 3-strand junction DNA; binds poorly if at all to blunt end double-stranded (ds)DNA substrates (PubMed:25059658). Translocates on ssDNA with 5'-3' polarity (PubMed:25059658).</text>
</comment>
<comment type="function">
    <text evidence="2">Unwinds G4 DNA (planar arrays of 4 guanine bases stabilized by hydrogen bonds, parallel and antiparallel arrays were tested) with both 5'- and 3'- ss-tails (PubMed:25059658).</text>
</comment>
<comment type="catalytic activity">
    <reaction evidence="2">
        <text>Couples ATP hydrolysis with the unwinding of duplex DNA at the replication fork by translocating in the 5'-3' direction. This creates two antiparallel DNA single strands (ssDNA). The leading ssDNA polymer is the template for DNA polymerase III holoenzyme which synthesizes a continuous strand.</text>
        <dbReference type="EC" id="5.6.2.3"/>
    </reaction>
</comment>
<comment type="catalytic activity">
    <reaction evidence="6">
        <text>ATP + H2O = ADP + phosphate + H(+)</text>
        <dbReference type="Rhea" id="RHEA:13065"/>
        <dbReference type="ChEBI" id="CHEBI:15377"/>
        <dbReference type="ChEBI" id="CHEBI:15378"/>
        <dbReference type="ChEBI" id="CHEBI:30616"/>
        <dbReference type="ChEBI" id="CHEBI:43474"/>
        <dbReference type="ChEBI" id="CHEBI:456216"/>
        <dbReference type="EC" id="5.6.2.3"/>
    </reaction>
</comment>
<comment type="cofactor">
    <cofactor evidence="6">
        <name>[4Fe-4S] cluster</name>
        <dbReference type="ChEBI" id="CHEBI:49883"/>
    </cofactor>
</comment>
<comment type="activity regulation">
    <text evidence="2">Helicase activity on G4 DNA is inhibited by porphyrin derivatives meso-tetra (N-methyl-4-pyridyl) porphine tetra tosylate (T4) and N-methyl mesoporphyrin IX (NMM) (PubMed:25059658). Helicase activity on forked duplexes is not inhibited by T4 or NMM (PubMed:25059658).</text>
</comment>
<comment type="miscellaneous">
    <text evidence="2">Dimethyl sulfate protection studies on 3 short, promoter-derived oligonucleotides (18 to 46 bases long) suggest they form G4 DNA structures in vitro (PubMed:25059658).</text>
</comment>
<comment type="similarity">
    <text evidence="5">Belongs to the helicase family. DinG subfamily.</text>
</comment>
<evidence type="ECO:0000255" key="1">
    <source>
        <dbReference type="PROSITE-ProRule" id="PRU00541"/>
    </source>
</evidence>
<evidence type="ECO:0000269" key="2">
    <source>
    </source>
</evidence>
<evidence type="ECO:0000303" key="3">
    <source>
    </source>
</evidence>
<evidence type="ECO:0000303" key="4">
    <source>
    </source>
</evidence>
<evidence type="ECO:0000305" key="5"/>
<evidence type="ECO:0000305" key="6">
    <source>
    </source>
</evidence>
<evidence type="ECO:0000312" key="7">
    <source>
        <dbReference type="EMBL" id="ABQ73079.1"/>
    </source>
</evidence>
<name>DING_MYCTA</name>
<gene>
    <name evidence="3" type="primary">dinG</name>
    <name evidence="7" type="ordered locus">MRA_1337</name>
</gene>
<reference evidence="7" key="1">
    <citation type="journal article" date="2008" name="PLoS ONE">
        <title>Genetic basis of virulence attenuation revealed by comparative genomic analysis of Mycobacterium tuberculosis strain H37Ra versus H37Rv.</title>
        <authorList>
            <person name="Zheng H."/>
            <person name="Lu L."/>
            <person name="Wang B."/>
            <person name="Pu S."/>
            <person name="Zhang X."/>
            <person name="Zhu G."/>
            <person name="Shi W."/>
            <person name="Zhang L."/>
            <person name="Wang H."/>
            <person name="Wang S."/>
            <person name="Zhao G."/>
            <person name="Zhang Y."/>
        </authorList>
    </citation>
    <scope>NUCLEOTIDE SEQUENCE [LARGE SCALE GENOMIC DNA]</scope>
    <source>
        <strain>ATCC 25177 / H37Ra</strain>
    </source>
</reference>
<reference key="2">
    <citation type="journal article" date="2014" name="J. Biol. Chem.">
        <title>Mycobacterium tuberculosis DinG is a structure-specific helicase that unwinds G4 DNA: implications for targeting G4 DNA as a novel therapeutic approach.</title>
        <authorList>
            <person name="Thakur R.S."/>
            <person name="Desingu A."/>
            <person name="Basavaraju S."/>
            <person name="Subramanya S."/>
            <person name="Rao D.N."/>
            <person name="Nagaraju G."/>
        </authorList>
    </citation>
    <scope>FUNCTION AS A 5'-3' HELICASE</scope>
    <scope>UNWINDS G4 DNA</scope>
    <scope>SUBSTRATE SPECIFICITY</scope>
    <scope>CATALYTIC ACTIVITY</scope>
    <scope>PROBABLE COFACTOR</scope>
    <scope>ACTIVITY REGULATION</scope>
    <scope>DNA-BINDING</scope>
    <scope>MUTAGENESIS OF LYS-55</scope>
    <source>
        <strain>ATCC 25177 / H37Ra</strain>
    </source>
</reference>
<keyword id="KW-0004">4Fe-4S</keyword>
<keyword id="KW-0067">ATP-binding</keyword>
<keyword id="KW-0227">DNA damage</keyword>
<keyword id="KW-0233">DNA recombination</keyword>
<keyword id="KW-0234">DNA repair</keyword>
<keyword id="KW-0238">DNA-binding</keyword>
<keyword id="KW-0347">Helicase</keyword>
<keyword id="KW-0378">Hydrolase</keyword>
<keyword id="KW-0408">Iron</keyword>
<keyword id="KW-0411">Iron-sulfur</keyword>
<keyword id="KW-0413">Isomerase</keyword>
<keyword id="KW-0479">Metal-binding</keyword>
<keyword id="KW-0547">Nucleotide-binding</keyword>
<keyword id="KW-1185">Reference proteome</keyword>